<proteinExistence type="inferred from homology"/>
<sequence length="171" mass="18451">MFDIGFSELLLVFIIGLVVLGPQRLPVAVKTVAGWIRALRSLATTVQNELTQELKLQEFQDSLKKVEKASLTNLTPELKASMDELRQAAESMKRSYVANDPEKASDEAHTIHNPVVKDNETAHEGVTPAAAQTQASSPEQKPETTPEPVVKPAADAEPKTAAPSPSSSDKP</sequence>
<feature type="chain" id="PRO_0000301168" description="Sec-independent protein translocase protein TatB">
    <location>
        <begin position="1"/>
        <end position="171"/>
    </location>
</feature>
<feature type="transmembrane region" description="Helical" evidence="1">
    <location>
        <begin position="1"/>
        <end position="21"/>
    </location>
</feature>
<feature type="region of interest" description="Disordered" evidence="2">
    <location>
        <begin position="117"/>
        <end position="171"/>
    </location>
</feature>
<feature type="compositionally biased region" description="Polar residues" evidence="2">
    <location>
        <begin position="130"/>
        <end position="139"/>
    </location>
</feature>
<evidence type="ECO:0000255" key="1">
    <source>
        <dbReference type="HAMAP-Rule" id="MF_00237"/>
    </source>
</evidence>
<evidence type="ECO:0000256" key="2">
    <source>
        <dbReference type="SAM" id="MobiDB-lite"/>
    </source>
</evidence>
<name>TATB_ECOUT</name>
<reference key="1">
    <citation type="journal article" date="2006" name="Proc. Natl. Acad. Sci. U.S.A.">
        <title>Identification of genes subject to positive selection in uropathogenic strains of Escherichia coli: a comparative genomics approach.</title>
        <authorList>
            <person name="Chen S.L."/>
            <person name="Hung C.-S."/>
            <person name="Xu J."/>
            <person name="Reigstad C.S."/>
            <person name="Magrini V."/>
            <person name="Sabo A."/>
            <person name="Blasiar D."/>
            <person name="Bieri T."/>
            <person name="Meyer R.R."/>
            <person name="Ozersky P."/>
            <person name="Armstrong J.R."/>
            <person name="Fulton R.S."/>
            <person name="Latreille J.P."/>
            <person name="Spieth J."/>
            <person name="Hooton T.M."/>
            <person name="Mardis E.R."/>
            <person name="Hultgren S.J."/>
            <person name="Gordon J.I."/>
        </authorList>
    </citation>
    <scope>NUCLEOTIDE SEQUENCE [LARGE SCALE GENOMIC DNA]</scope>
    <source>
        <strain>UTI89 / UPEC</strain>
    </source>
</reference>
<accession>Q1R473</accession>
<gene>
    <name evidence="1" type="primary">tatB</name>
    <name type="ordered locus">UTI89_C4424</name>
</gene>
<comment type="function">
    <text evidence="1">Part of the twin-arginine translocation (Tat) system that transports large folded proteins containing a characteristic twin-arginine motif in their signal peptide across membranes. Together with TatC, TatB is part of a receptor directly interacting with Tat signal peptides. TatB may form an oligomeric binding site that transiently accommodates folded Tat precursor proteins before their translocation.</text>
</comment>
<comment type="subunit">
    <text evidence="1">The Tat system comprises two distinct complexes: a TatABC complex, containing multiple copies of TatA, TatB and TatC subunits, and a separate TatA complex, containing only TatA subunits. Substrates initially bind to the TatABC complex, which probably triggers association of the separate TatA complex to form the active translocon.</text>
</comment>
<comment type="subcellular location">
    <subcellularLocation>
        <location evidence="1">Cell inner membrane</location>
        <topology evidence="1">Single-pass membrane protein</topology>
    </subcellularLocation>
</comment>
<comment type="similarity">
    <text evidence="1">Belongs to the TatB family.</text>
</comment>
<dbReference type="EMBL" id="CP000243">
    <property type="protein sequence ID" value="ABE09841.1"/>
    <property type="molecule type" value="Genomic_DNA"/>
</dbReference>
<dbReference type="RefSeq" id="WP_000459600.1">
    <property type="nucleotide sequence ID" value="NZ_CP064825.1"/>
</dbReference>
<dbReference type="SMR" id="Q1R473"/>
<dbReference type="KEGG" id="eci:UTI89_C4424"/>
<dbReference type="HOGENOM" id="CLU_086034_1_0_6"/>
<dbReference type="Proteomes" id="UP000001952">
    <property type="component" value="Chromosome"/>
</dbReference>
<dbReference type="GO" id="GO:0033281">
    <property type="term" value="C:TAT protein transport complex"/>
    <property type="evidence" value="ECO:0007669"/>
    <property type="project" value="UniProtKB-UniRule"/>
</dbReference>
<dbReference type="GO" id="GO:0008320">
    <property type="term" value="F:protein transmembrane transporter activity"/>
    <property type="evidence" value="ECO:0007669"/>
    <property type="project" value="UniProtKB-UniRule"/>
</dbReference>
<dbReference type="GO" id="GO:0043953">
    <property type="term" value="P:protein transport by the Tat complex"/>
    <property type="evidence" value="ECO:0007669"/>
    <property type="project" value="UniProtKB-UniRule"/>
</dbReference>
<dbReference type="FunFam" id="1.20.5.3310:FF:000002">
    <property type="entry name" value="Sec-independent protein translocase protein TatB"/>
    <property type="match status" value="1"/>
</dbReference>
<dbReference type="Gene3D" id="1.20.5.3310">
    <property type="match status" value="1"/>
</dbReference>
<dbReference type="HAMAP" id="MF_00237">
    <property type="entry name" value="TatB"/>
    <property type="match status" value="1"/>
</dbReference>
<dbReference type="InterPro" id="IPR018448">
    <property type="entry name" value="TatB"/>
</dbReference>
<dbReference type="NCBIfam" id="TIGR01410">
    <property type="entry name" value="tatB"/>
    <property type="match status" value="1"/>
</dbReference>
<dbReference type="PANTHER" id="PTHR33162">
    <property type="entry name" value="SEC-INDEPENDENT PROTEIN TRANSLOCASE PROTEIN TATA, CHLOROPLASTIC"/>
    <property type="match status" value="1"/>
</dbReference>
<dbReference type="PANTHER" id="PTHR33162:SF1">
    <property type="entry name" value="SEC-INDEPENDENT PROTEIN TRANSLOCASE PROTEIN TATA, CHLOROPLASTIC"/>
    <property type="match status" value="1"/>
</dbReference>
<dbReference type="PRINTS" id="PR01506">
    <property type="entry name" value="TATBPROTEIN"/>
</dbReference>
<organism>
    <name type="scientific">Escherichia coli (strain UTI89 / UPEC)</name>
    <dbReference type="NCBI Taxonomy" id="364106"/>
    <lineage>
        <taxon>Bacteria</taxon>
        <taxon>Pseudomonadati</taxon>
        <taxon>Pseudomonadota</taxon>
        <taxon>Gammaproteobacteria</taxon>
        <taxon>Enterobacterales</taxon>
        <taxon>Enterobacteriaceae</taxon>
        <taxon>Escherichia</taxon>
    </lineage>
</organism>
<protein>
    <recommendedName>
        <fullName evidence="1">Sec-independent protein translocase protein TatB</fullName>
    </recommendedName>
</protein>
<keyword id="KW-0997">Cell inner membrane</keyword>
<keyword id="KW-1003">Cell membrane</keyword>
<keyword id="KW-0472">Membrane</keyword>
<keyword id="KW-0653">Protein transport</keyword>
<keyword id="KW-0811">Translocation</keyword>
<keyword id="KW-0812">Transmembrane</keyword>
<keyword id="KW-1133">Transmembrane helix</keyword>
<keyword id="KW-0813">Transport</keyword>